<sequence length="456" mass="49610">MGQSMSCGSRPEHGIFASVQCGDIITIRRVMATEPSLLNQTTPYDRHSVLHVAAANGQIEILSLLLERFTNPDLLNRHKQTPLMLAAMYGRISCVKKLAEVGANILMFDSVNRRTCLHYAAYYGHANCVQAILSAAQSSPVAVHWGYARFVNIRDDKGATPLHLAARQRRPECVNVLLDSGSLVCASTSVYGSPGSTPLHLAARSGSIDCVRKLLAWGADRLQRDASGRIPYVVAMKHKHGACGALLNPSSAEPLVWPSPLKFISELNDEAKLLLEQALMEANREREKTILKGTAYSLPSPSFSDTDDNMSEVSDTELCCICFEQVCTIEVKDCGHQMCAQCTLALCCHNKPNPTTSTVTPPVCPFCRSTIACLVVAQNNNNNNEKSKSLDDVVVVDREAGDVSSSKFRKHRRSINLGEESSSFMGLSTIGSFGRITGRGSGRIAAENELMDKPIL</sequence>
<feature type="chain" id="PRO_0000395739" description="Putative E3 ubiquitin-protein ligase XBAT31">
    <location>
        <begin position="1"/>
        <end position="456"/>
    </location>
</feature>
<feature type="repeat" description="ANK 1">
    <location>
        <begin position="45"/>
        <end position="74"/>
    </location>
</feature>
<feature type="repeat" description="ANK 2">
    <location>
        <begin position="78"/>
        <end position="107"/>
    </location>
</feature>
<feature type="repeat" description="ANK 3">
    <location>
        <begin position="112"/>
        <end position="141"/>
    </location>
</feature>
<feature type="repeat" description="ANK 4">
    <location>
        <begin position="157"/>
        <end position="186"/>
    </location>
</feature>
<feature type="repeat" description="ANK 5">
    <location>
        <begin position="194"/>
        <end position="224"/>
    </location>
</feature>
<feature type="zinc finger region" description="RING-type" evidence="1">
    <location>
        <begin position="319"/>
        <end position="368"/>
    </location>
</feature>
<feature type="sequence conflict" description="In Ref. 5; BAD95395." evidence="3" ref="5">
    <original>R</original>
    <variation>S</variation>
    <location>
        <position position="229"/>
    </location>
</feature>
<feature type="sequence conflict" description="In Ref. 5; BAD95395." evidence="3" ref="5">
    <original>A</original>
    <variation>V</variation>
    <location>
        <position position="235"/>
    </location>
</feature>
<keyword id="KW-0025">Alternative splicing</keyword>
<keyword id="KW-0040">ANK repeat</keyword>
<keyword id="KW-0479">Metal-binding</keyword>
<keyword id="KW-1185">Reference proteome</keyword>
<keyword id="KW-0677">Repeat</keyword>
<keyword id="KW-0808">Transferase</keyword>
<keyword id="KW-0833">Ubl conjugation pathway</keyword>
<keyword id="KW-0862">Zinc</keyword>
<keyword id="KW-0863">Zinc-finger</keyword>
<reference key="1">
    <citation type="journal article" date="2005" name="Plant Physiol.">
        <title>Functional analysis of the RING-type ubiquitin ligase family of Arabidopsis.</title>
        <authorList>
            <person name="Stone S.L."/>
            <person name="Hauksdottir H."/>
            <person name="Troy A."/>
            <person name="Herschleb J."/>
            <person name="Kraft E."/>
            <person name="Callis J."/>
        </authorList>
    </citation>
    <scope>NUCLEOTIDE SEQUENCE [MRNA]</scope>
    <scope>FUNCTION</scope>
    <source>
        <strain>cv. Columbia</strain>
        <tissue>Seed</tissue>
    </source>
</reference>
<reference key="2">
    <citation type="journal article" date="1999" name="Nature">
        <title>Sequence and analysis of chromosome 2 of the plant Arabidopsis thaliana.</title>
        <authorList>
            <person name="Lin X."/>
            <person name="Kaul S."/>
            <person name="Rounsley S.D."/>
            <person name="Shea T.P."/>
            <person name="Benito M.-I."/>
            <person name="Town C.D."/>
            <person name="Fujii C.Y."/>
            <person name="Mason T.M."/>
            <person name="Bowman C.L."/>
            <person name="Barnstead M.E."/>
            <person name="Feldblyum T.V."/>
            <person name="Buell C.R."/>
            <person name="Ketchum K.A."/>
            <person name="Lee J.J."/>
            <person name="Ronning C.M."/>
            <person name="Koo H.L."/>
            <person name="Moffat K.S."/>
            <person name="Cronin L.A."/>
            <person name="Shen M."/>
            <person name="Pai G."/>
            <person name="Van Aken S."/>
            <person name="Umayam L."/>
            <person name="Tallon L.J."/>
            <person name="Gill J.E."/>
            <person name="Adams M.D."/>
            <person name="Carrera A.J."/>
            <person name="Creasy T.H."/>
            <person name="Goodman H.M."/>
            <person name="Somerville C.R."/>
            <person name="Copenhaver G.P."/>
            <person name="Preuss D."/>
            <person name="Nierman W.C."/>
            <person name="White O."/>
            <person name="Eisen J.A."/>
            <person name="Salzberg S.L."/>
            <person name="Fraser C.M."/>
            <person name="Venter J.C."/>
        </authorList>
    </citation>
    <scope>NUCLEOTIDE SEQUENCE [LARGE SCALE GENOMIC DNA]</scope>
    <source>
        <strain>cv. Columbia</strain>
    </source>
</reference>
<reference key="3">
    <citation type="journal article" date="2017" name="Plant J.">
        <title>Araport11: a complete reannotation of the Arabidopsis thaliana reference genome.</title>
        <authorList>
            <person name="Cheng C.Y."/>
            <person name="Krishnakumar V."/>
            <person name="Chan A.P."/>
            <person name="Thibaud-Nissen F."/>
            <person name="Schobel S."/>
            <person name="Town C.D."/>
        </authorList>
    </citation>
    <scope>GENOME REANNOTATION</scope>
    <source>
        <strain>cv. Columbia</strain>
    </source>
</reference>
<reference key="4">
    <citation type="journal article" date="2003" name="Science">
        <title>Empirical analysis of transcriptional activity in the Arabidopsis genome.</title>
        <authorList>
            <person name="Yamada K."/>
            <person name="Lim J."/>
            <person name="Dale J.M."/>
            <person name="Chen H."/>
            <person name="Shinn P."/>
            <person name="Palm C.J."/>
            <person name="Southwick A.M."/>
            <person name="Wu H.C."/>
            <person name="Kim C.J."/>
            <person name="Nguyen M."/>
            <person name="Pham P.K."/>
            <person name="Cheuk R.F."/>
            <person name="Karlin-Newmann G."/>
            <person name="Liu S.X."/>
            <person name="Lam B."/>
            <person name="Sakano H."/>
            <person name="Wu T."/>
            <person name="Yu G."/>
            <person name="Miranda M."/>
            <person name="Quach H.L."/>
            <person name="Tripp M."/>
            <person name="Chang C.H."/>
            <person name="Lee J.M."/>
            <person name="Toriumi M.J."/>
            <person name="Chan M.M."/>
            <person name="Tang C.C."/>
            <person name="Onodera C.S."/>
            <person name="Deng J.M."/>
            <person name="Akiyama K."/>
            <person name="Ansari Y."/>
            <person name="Arakawa T."/>
            <person name="Banh J."/>
            <person name="Banno F."/>
            <person name="Bowser L."/>
            <person name="Brooks S.Y."/>
            <person name="Carninci P."/>
            <person name="Chao Q."/>
            <person name="Choy N."/>
            <person name="Enju A."/>
            <person name="Goldsmith A.D."/>
            <person name="Gurjal M."/>
            <person name="Hansen N.F."/>
            <person name="Hayashizaki Y."/>
            <person name="Johnson-Hopson C."/>
            <person name="Hsuan V.W."/>
            <person name="Iida K."/>
            <person name="Karnes M."/>
            <person name="Khan S."/>
            <person name="Koesema E."/>
            <person name="Ishida J."/>
            <person name="Jiang P.X."/>
            <person name="Jones T."/>
            <person name="Kawai J."/>
            <person name="Kamiya A."/>
            <person name="Meyers C."/>
            <person name="Nakajima M."/>
            <person name="Narusaka M."/>
            <person name="Seki M."/>
            <person name="Sakurai T."/>
            <person name="Satou M."/>
            <person name="Tamse R."/>
            <person name="Vaysberg M."/>
            <person name="Wallender E.K."/>
            <person name="Wong C."/>
            <person name="Yamamura Y."/>
            <person name="Yuan S."/>
            <person name="Shinozaki K."/>
            <person name="Davis R.W."/>
            <person name="Theologis A."/>
            <person name="Ecker J.R."/>
        </authorList>
    </citation>
    <scope>NUCLEOTIDE SEQUENCE [LARGE SCALE MRNA]</scope>
    <source>
        <strain>cv. Columbia</strain>
    </source>
</reference>
<reference key="5">
    <citation type="submission" date="2005-03" db="EMBL/GenBank/DDBJ databases">
        <title>Large-scale analysis of RIKEN Arabidopsis full-length (RAFL) cDNAs.</title>
        <authorList>
            <person name="Totoki Y."/>
            <person name="Seki M."/>
            <person name="Ishida J."/>
            <person name="Nakajima M."/>
            <person name="Enju A."/>
            <person name="Kamiya A."/>
            <person name="Narusaka M."/>
            <person name="Shin-i T."/>
            <person name="Nakagawa M."/>
            <person name="Sakamoto N."/>
            <person name="Oishi K."/>
            <person name="Kohara Y."/>
            <person name="Kobayashi M."/>
            <person name="Toyoda A."/>
            <person name="Sakaki Y."/>
            <person name="Sakurai T."/>
            <person name="Iida K."/>
            <person name="Akiyama K."/>
            <person name="Satou M."/>
            <person name="Toyoda T."/>
            <person name="Konagaya A."/>
            <person name="Carninci P."/>
            <person name="Kawai J."/>
            <person name="Hayashizaki Y."/>
            <person name="Shinozaki K."/>
        </authorList>
    </citation>
    <scope>NUCLEOTIDE SEQUENCE [LARGE SCALE MRNA] OF 229-456</scope>
    <source>
        <strain>cv. Columbia</strain>
    </source>
</reference>
<accession>Q94B55</accession>
<accession>Q56W24</accession>
<accession>Q944L4</accession>
<accession>Q9ZV30</accession>
<evidence type="ECO:0000255" key="1">
    <source>
        <dbReference type="PROSITE-ProRule" id="PRU00175"/>
    </source>
</evidence>
<evidence type="ECO:0000269" key="2">
    <source>
    </source>
</evidence>
<evidence type="ECO:0000305" key="3"/>
<proteinExistence type="evidence at transcript level"/>
<protein>
    <recommendedName>
        <fullName>Putative E3 ubiquitin-protein ligase XBAT31</fullName>
        <ecNumber>2.3.2.27</ecNumber>
    </recommendedName>
    <alternativeName>
        <fullName>Ankyrin repeat domain and RING finger-containing protein XBAT31</fullName>
    </alternativeName>
    <alternativeName>
        <fullName>Protein XB3 homolog 1</fullName>
    </alternativeName>
    <alternativeName>
        <fullName>RING-type E3 ubiquitin transferase XB31</fullName>
    </alternativeName>
</protein>
<name>XB31_ARATH</name>
<dbReference type="EC" id="2.3.2.27"/>
<dbReference type="EMBL" id="DQ086863">
    <property type="protein sequence ID" value="AAZ14079.1"/>
    <property type="molecule type" value="mRNA"/>
</dbReference>
<dbReference type="EMBL" id="AC005727">
    <property type="protein sequence ID" value="AAC79588.1"/>
    <property type="status" value="ALT_INIT"/>
    <property type="molecule type" value="Genomic_DNA"/>
</dbReference>
<dbReference type="EMBL" id="CP002685">
    <property type="protein sequence ID" value="AEC08179.1"/>
    <property type="molecule type" value="Genomic_DNA"/>
</dbReference>
<dbReference type="EMBL" id="AF370581">
    <property type="protein sequence ID" value="AAK49587.1"/>
    <property type="molecule type" value="mRNA"/>
</dbReference>
<dbReference type="EMBL" id="AF428301">
    <property type="protein sequence ID" value="AAL16133.1"/>
    <property type="status" value="ALT_SEQ"/>
    <property type="molecule type" value="mRNA"/>
</dbReference>
<dbReference type="EMBL" id="AY042842">
    <property type="protein sequence ID" value="AAK68782.1"/>
    <property type="molecule type" value="mRNA"/>
</dbReference>
<dbReference type="EMBL" id="AY081458">
    <property type="protein sequence ID" value="AAM10020.1"/>
    <property type="molecule type" value="mRNA"/>
</dbReference>
<dbReference type="EMBL" id="BT000727">
    <property type="protein sequence ID" value="AAN31869.1"/>
    <property type="molecule type" value="mRNA"/>
</dbReference>
<dbReference type="EMBL" id="AK222223">
    <property type="protein sequence ID" value="BAD95395.1"/>
    <property type="status" value="ALT_INIT"/>
    <property type="molecule type" value="mRNA"/>
</dbReference>
<dbReference type="PIR" id="E84689">
    <property type="entry name" value="E84689"/>
</dbReference>
<dbReference type="RefSeq" id="NP_180450.2">
    <molecule id="Q94B55-1"/>
    <property type="nucleotide sequence ID" value="NM_128443.4"/>
</dbReference>
<dbReference type="SMR" id="Q94B55"/>
<dbReference type="BioGRID" id="2783">
    <property type="interactions" value="2"/>
</dbReference>
<dbReference type="FunCoup" id="Q94B55">
    <property type="interactions" value="190"/>
</dbReference>
<dbReference type="IntAct" id="Q94B55">
    <property type="interactions" value="2"/>
</dbReference>
<dbReference type="STRING" id="3702.Q94B55"/>
<dbReference type="PaxDb" id="3702-AT2G28840.1"/>
<dbReference type="EnsemblPlants" id="AT2G28840.1">
    <molecule id="Q94B55-1"/>
    <property type="protein sequence ID" value="AT2G28840.1"/>
    <property type="gene ID" value="AT2G28840"/>
</dbReference>
<dbReference type="GeneID" id="817433"/>
<dbReference type="Gramene" id="AT2G28840.1">
    <molecule id="Q94B55-1"/>
    <property type="protein sequence ID" value="AT2G28840.1"/>
    <property type="gene ID" value="AT2G28840"/>
</dbReference>
<dbReference type="KEGG" id="ath:AT2G28840"/>
<dbReference type="Araport" id="AT2G28840"/>
<dbReference type="TAIR" id="AT2G28840">
    <property type="gene designation" value="XBAT31"/>
</dbReference>
<dbReference type="eggNOG" id="KOG4177">
    <property type="taxonomic scope" value="Eukaryota"/>
</dbReference>
<dbReference type="HOGENOM" id="CLU_049095_1_0_1"/>
<dbReference type="InParanoid" id="Q94B55"/>
<dbReference type="OMA" id="AYYGHFE"/>
<dbReference type="PhylomeDB" id="Q94B55"/>
<dbReference type="UniPathway" id="UPA00143"/>
<dbReference type="PRO" id="PR:Q94B55"/>
<dbReference type="Proteomes" id="UP000006548">
    <property type="component" value="Chromosome 2"/>
</dbReference>
<dbReference type="ExpressionAtlas" id="Q94B55">
    <property type="expression patterns" value="baseline and differential"/>
</dbReference>
<dbReference type="GO" id="GO:0016740">
    <property type="term" value="F:transferase activity"/>
    <property type="evidence" value="ECO:0007669"/>
    <property type="project" value="UniProtKB-KW"/>
</dbReference>
<dbReference type="GO" id="GO:0008270">
    <property type="term" value="F:zinc ion binding"/>
    <property type="evidence" value="ECO:0007669"/>
    <property type="project" value="UniProtKB-KW"/>
</dbReference>
<dbReference type="GO" id="GO:0016567">
    <property type="term" value="P:protein ubiquitination"/>
    <property type="evidence" value="ECO:0007669"/>
    <property type="project" value="UniProtKB-UniPathway"/>
</dbReference>
<dbReference type="GO" id="GO:0009408">
    <property type="term" value="P:response to heat"/>
    <property type="evidence" value="ECO:0000270"/>
    <property type="project" value="TAIR"/>
</dbReference>
<dbReference type="CDD" id="cd23144">
    <property type="entry name" value="RING-HC_XBAT31-like"/>
    <property type="match status" value="1"/>
</dbReference>
<dbReference type="Gene3D" id="1.25.40.20">
    <property type="entry name" value="Ankyrin repeat-containing domain"/>
    <property type="match status" value="2"/>
</dbReference>
<dbReference type="InterPro" id="IPR002110">
    <property type="entry name" value="Ankyrin_rpt"/>
</dbReference>
<dbReference type="InterPro" id="IPR036770">
    <property type="entry name" value="Ankyrin_rpt-contain_sf"/>
</dbReference>
<dbReference type="InterPro" id="IPR056760">
    <property type="entry name" value="RING_XB3-like"/>
</dbReference>
<dbReference type="InterPro" id="IPR001841">
    <property type="entry name" value="Znf_RING"/>
</dbReference>
<dbReference type="PANTHER" id="PTHR24128:SF14">
    <property type="entry name" value="E3 UBIQUITIN-PROTEIN LIGASE XBAT31-RELATED"/>
    <property type="match status" value="1"/>
</dbReference>
<dbReference type="PANTHER" id="PTHR24128">
    <property type="entry name" value="HOMEOBOX PROTEIN WARIAI"/>
    <property type="match status" value="1"/>
</dbReference>
<dbReference type="Pfam" id="PF00023">
    <property type="entry name" value="Ank"/>
    <property type="match status" value="1"/>
</dbReference>
<dbReference type="Pfam" id="PF12796">
    <property type="entry name" value="Ank_2"/>
    <property type="match status" value="2"/>
</dbReference>
<dbReference type="Pfam" id="PF24921">
    <property type="entry name" value="RING_XB3-XBAT31"/>
    <property type="match status" value="1"/>
</dbReference>
<dbReference type="SMART" id="SM00248">
    <property type="entry name" value="ANK"/>
    <property type="match status" value="5"/>
</dbReference>
<dbReference type="SUPFAM" id="SSF48403">
    <property type="entry name" value="Ankyrin repeat"/>
    <property type="match status" value="1"/>
</dbReference>
<dbReference type="SUPFAM" id="SSF57850">
    <property type="entry name" value="RING/U-box"/>
    <property type="match status" value="1"/>
</dbReference>
<dbReference type="PROSITE" id="PS50297">
    <property type="entry name" value="ANK_REP_REGION"/>
    <property type="match status" value="1"/>
</dbReference>
<dbReference type="PROSITE" id="PS50088">
    <property type="entry name" value="ANK_REPEAT"/>
    <property type="match status" value="4"/>
</dbReference>
<dbReference type="PROSITE" id="PS50089">
    <property type="entry name" value="ZF_RING_2"/>
    <property type="match status" value="1"/>
</dbReference>
<comment type="function">
    <text evidence="2">No E3 ubiquitin-protein ligase activity observed when associated with the E2 enzyme UBC8 in vitro.</text>
</comment>
<comment type="catalytic activity">
    <reaction>
        <text>S-ubiquitinyl-[E2 ubiquitin-conjugating enzyme]-L-cysteine + [acceptor protein]-L-lysine = [E2 ubiquitin-conjugating enzyme]-L-cysteine + N(6)-ubiquitinyl-[acceptor protein]-L-lysine.</text>
        <dbReference type="EC" id="2.3.2.27"/>
    </reaction>
</comment>
<comment type="pathway">
    <text>Protein modification; protein ubiquitination.</text>
</comment>
<comment type="alternative products">
    <event type="alternative splicing"/>
    <isoform>
        <id>Q94B55-1</id>
        <name>1</name>
        <sequence type="displayed"/>
    </isoform>
    <text>A number of isoforms are produced. According to EST sequences.</text>
</comment>
<comment type="sequence caution" evidence="3">
    <conflict type="erroneous initiation">
        <sequence resource="EMBL-CDS" id="AAC79588"/>
    </conflict>
    <text>Truncated N-terminus.</text>
</comment>
<comment type="sequence caution" evidence="3">
    <conflict type="erroneous termination">
        <sequence resource="EMBL-CDS" id="AAL16133"/>
    </conflict>
    <text>Truncated C-terminus.</text>
</comment>
<comment type="sequence caution" evidence="3">
    <conflict type="erroneous initiation">
        <sequence resource="EMBL-CDS" id="BAD95395"/>
    </conflict>
    <text>Truncated N-terminus.</text>
</comment>
<gene>
    <name type="primary">XBAT31</name>
    <name type="ordered locus">At2g28840</name>
    <name type="ORF">F8N16.13</name>
</gene>
<organism>
    <name type="scientific">Arabidopsis thaliana</name>
    <name type="common">Mouse-ear cress</name>
    <dbReference type="NCBI Taxonomy" id="3702"/>
    <lineage>
        <taxon>Eukaryota</taxon>
        <taxon>Viridiplantae</taxon>
        <taxon>Streptophyta</taxon>
        <taxon>Embryophyta</taxon>
        <taxon>Tracheophyta</taxon>
        <taxon>Spermatophyta</taxon>
        <taxon>Magnoliopsida</taxon>
        <taxon>eudicotyledons</taxon>
        <taxon>Gunneridae</taxon>
        <taxon>Pentapetalae</taxon>
        <taxon>rosids</taxon>
        <taxon>malvids</taxon>
        <taxon>Brassicales</taxon>
        <taxon>Brassicaceae</taxon>
        <taxon>Camelineae</taxon>
        <taxon>Arabidopsis</taxon>
    </lineage>
</organism>